<name>ALBA_PICTO</name>
<protein>
    <recommendedName>
        <fullName evidence="1">DNA/RNA-binding protein Alba</fullName>
    </recommendedName>
</protein>
<dbReference type="EMBL" id="AE017261">
    <property type="protein sequence ID" value="AAT43785.1"/>
    <property type="molecule type" value="Genomic_DNA"/>
</dbReference>
<dbReference type="RefSeq" id="WP_011178001.1">
    <property type="nucleotide sequence ID" value="NC_005877.1"/>
</dbReference>
<dbReference type="SMR" id="Q6KZR7"/>
<dbReference type="STRING" id="263820.PTO1200"/>
<dbReference type="PaxDb" id="263820-PTO1200"/>
<dbReference type="GeneID" id="2844576"/>
<dbReference type="KEGG" id="pto:PTO1200"/>
<dbReference type="PATRIC" id="fig|263820.9.peg.1247"/>
<dbReference type="eggNOG" id="arCOG01753">
    <property type="taxonomic scope" value="Archaea"/>
</dbReference>
<dbReference type="HOGENOM" id="CLU_110989_1_0_2"/>
<dbReference type="InParanoid" id="Q6KZR7"/>
<dbReference type="OrthoDB" id="10360at2157"/>
<dbReference type="Proteomes" id="UP000000438">
    <property type="component" value="Chromosome"/>
</dbReference>
<dbReference type="GO" id="GO:0005694">
    <property type="term" value="C:chromosome"/>
    <property type="evidence" value="ECO:0007669"/>
    <property type="project" value="UniProtKB-SubCell"/>
</dbReference>
<dbReference type="GO" id="GO:0005737">
    <property type="term" value="C:cytoplasm"/>
    <property type="evidence" value="ECO:0007669"/>
    <property type="project" value="UniProtKB-SubCell"/>
</dbReference>
<dbReference type="GO" id="GO:0003690">
    <property type="term" value="F:double-stranded DNA binding"/>
    <property type="evidence" value="ECO:0007669"/>
    <property type="project" value="UniProtKB-UniRule"/>
</dbReference>
<dbReference type="GO" id="GO:0003723">
    <property type="term" value="F:RNA binding"/>
    <property type="evidence" value="ECO:0007669"/>
    <property type="project" value="InterPro"/>
</dbReference>
<dbReference type="GO" id="GO:0030261">
    <property type="term" value="P:chromosome condensation"/>
    <property type="evidence" value="ECO:0007669"/>
    <property type="project" value="UniProtKB-KW"/>
</dbReference>
<dbReference type="Gene3D" id="3.30.110.20">
    <property type="entry name" value="Alba-like domain"/>
    <property type="match status" value="1"/>
</dbReference>
<dbReference type="HAMAP" id="MF_01122">
    <property type="entry name" value="AlbA"/>
    <property type="match status" value="1"/>
</dbReference>
<dbReference type="InterPro" id="IPR036882">
    <property type="entry name" value="Alba-like_dom_sf"/>
</dbReference>
<dbReference type="InterPro" id="IPR013795">
    <property type="entry name" value="DNA/RNA-bd_Alba"/>
</dbReference>
<dbReference type="InterPro" id="IPR002775">
    <property type="entry name" value="DNA/RNA-bd_Alba-like"/>
</dbReference>
<dbReference type="NCBIfam" id="TIGR00285">
    <property type="entry name" value="DNA-binding protein Alba"/>
    <property type="match status" value="1"/>
</dbReference>
<dbReference type="NCBIfam" id="NF003088">
    <property type="entry name" value="PRK04015.1"/>
    <property type="match status" value="1"/>
</dbReference>
<dbReference type="Pfam" id="PF01918">
    <property type="entry name" value="Alba"/>
    <property type="match status" value="1"/>
</dbReference>
<dbReference type="PIRSF" id="PIRSF028732">
    <property type="entry name" value="Alba"/>
    <property type="match status" value="1"/>
</dbReference>
<dbReference type="SUPFAM" id="SSF82704">
    <property type="entry name" value="AlbA-like"/>
    <property type="match status" value="1"/>
</dbReference>
<feature type="chain" id="PRO_1000065262" description="DNA/RNA-binding protein Alba">
    <location>
        <begin position="1"/>
        <end position="90"/>
    </location>
</feature>
<feature type="modified residue" description="N6-acetyllysine" evidence="1">
    <location>
        <position position="11"/>
    </location>
</feature>
<keyword id="KW-0007">Acetylation</keyword>
<keyword id="KW-0158">Chromosome</keyword>
<keyword id="KW-0963">Cytoplasm</keyword>
<keyword id="KW-0226">DNA condensation</keyword>
<keyword id="KW-0238">DNA-binding</keyword>
<accession>Q6KZR7</accession>
<organism>
    <name type="scientific">Picrophilus torridus (strain ATCC 700027 / DSM 9790 / JCM 10055 / NBRC 100828 / KAW 2/3)</name>
    <dbReference type="NCBI Taxonomy" id="1122961"/>
    <lineage>
        <taxon>Archaea</taxon>
        <taxon>Methanobacteriati</taxon>
        <taxon>Thermoplasmatota</taxon>
        <taxon>Thermoplasmata</taxon>
        <taxon>Thermoplasmatales</taxon>
        <taxon>Picrophilaceae</taxon>
        <taxon>Picrophilus</taxon>
    </lineage>
</organism>
<sequence length="90" mass="10056">MAEENVIFVGKKPTMNYVLAIVTQFNNNSTSRIVIKARGKAISKAVDIAEITRHKFIQDAKYDEIKLDTESLQGEKGESNVSSIEIVLTR</sequence>
<gene>
    <name evidence="1" type="primary">albA</name>
    <name type="ordered locus">PTO1200</name>
</gene>
<evidence type="ECO:0000255" key="1">
    <source>
        <dbReference type="HAMAP-Rule" id="MF_01122"/>
    </source>
</evidence>
<reference key="1">
    <citation type="journal article" date="2004" name="Proc. Natl. Acad. Sci. U.S.A.">
        <title>Genome sequence of Picrophilus torridus and its implications for life around pH 0.</title>
        <authorList>
            <person name="Fuetterer O."/>
            <person name="Angelov A."/>
            <person name="Liesegang H."/>
            <person name="Gottschalk G."/>
            <person name="Schleper C."/>
            <person name="Schepers B."/>
            <person name="Dock C."/>
            <person name="Antranikian G."/>
            <person name="Liebl W."/>
        </authorList>
    </citation>
    <scope>NUCLEOTIDE SEQUENCE [LARGE SCALE GENOMIC DNA]</scope>
    <source>
        <strain>ATCC 700027 / DSM 9790 / JCM 10055 / NBRC 100828 / KAW 2/3</strain>
    </source>
</reference>
<proteinExistence type="inferred from homology"/>
<comment type="function">
    <text evidence="1">Binds double-stranded DNA tightly but without sequence specificity. Involved in DNA compaction.</text>
</comment>
<comment type="subcellular location">
    <subcellularLocation>
        <location evidence="1">Cytoplasm</location>
    </subcellularLocation>
    <subcellularLocation>
        <location evidence="1">Chromosome</location>
    </subcellularLocation>
</comment>
<comment type="PTM">
    <text evidence="1">Acetylated. Acetylation at Lys-11 decreases DNA-binding affinity.</text>
</comment>
<comment type="similarity">
    <text evidence="1">Belongs to the histone-like Alba family.</text>
</comment>